<organism>
    <name type="scientific">Staphylococcus aureus (strain COL)</name>
    <dbReference type="NCBI Taxonomy" id="93062"/>
    <lineage>
        <taxon>Bacteria</taxon>
        <taxon>Bacillati</taxon>
        <taxon>Bacillota</taxon>
        <taxon>Bacilli</taxon>
        <taxon>Bacillales</taxon>
        <taxon>Staphylococcaceae</taxon>
        <taxon>Staphylococcus</taxon>
    </lineage>
</organism>
<accession>Q5HIH4</accession>
<comment type="function">
    <text evidence="1">This is one of the proteins that binds to the 5S RNA in the ribosome where it forms part of the central protuberance.</text>
</comment>
<comment type="subunit">
    <text evidence="1">Part of the 50S ribosomal subunit; part of the 5S rRNA/L5/L18/L25 subcomplex. Contacts the 5S rRNA. Binds to the 5S rRNA independently of L5 and L18.</text>
</comment>
<comment type="similarity">
    <text evidence="1">Belongs to the bacterial ribosomal protein bL25 family. CTC subfamily.</text>
</comment>
<proteinExistence type="inferred from homology"/>
<evidence type="ECO:0000255" key="1">
    <source>
        <dbReference type="HAMAP-Rule" id="MF_01334"/>
    </source>
</evidence>
<evidence type="ECO:0000256" key="2">
    <source>
        <dbReference type="SAM" id="MobiDB-lite"/>
    </source>
</evidence>
<evidence type="ECO:0000305" key="3"/>
<keyword id="KW-0687">Ribonucleoprotein</keyword>
<keyword id="KW-0689">Ribosomal protein</keyword>
<keyword id="KW-0694">RNA-binding</keyword>
<keyword id="KW-0699">rRNA-binding</keyword>
<sequence>MASLKSIIRQGKQTRSDLKQLRKSGKVPAVVYGYGTKNVSVKVDEVEFIKVIREVGRNGVIELGVGSKTIKVMVADYQFDPLKNQITHIDFLAINMSEERTVEVPVQLVGEAVGAKEGGVVEQPLFNLEVTATPDNIPEAIEVDITELNINDSLTVADVKVTGDFKIENDSAESVVTVVAPTEEPTEEEIEAMEGEQQTEEPEVVGESKEDEEKTEE</sequence>
<gene>
    <name evidence="1" type="primary">rplY</name>
    <name evidence="1" type="synonym">ctc</name>
    <name type="ordered locus">SACOL0545</name>
</gene>
<name>RL25_STAAC</name>
<protein>
    <recommendedName>
        <fullName evidence="1">Large ribosomal subunit protein bL25</fullName>
    </recommendedName>
    <alternativeName>
        <fullName evidence="3">50S ribosomal protein L25</fullName>
    </alternativeName>
    <alternativeName>
        <fullName evidence="1">General stress protein CTC</fullName>
    </alternativeName>
</protein>
<dbReference type="EMBL" id="CP000046">
    <property type="protein sequence ID" value="AAW36322.1"/>
    <property type="molecule type" value="Genomic_DNA"/>
</dbReference>
<dbReference type="RefSeq" id="WP_000157650.1">
    <property type="nucleotide sequence ID" value="NZ_JBGOFO010000012.1"/>
</dbReference>
<dbReference type="SMR" id="Q5HIH4"/>
<dbReference type="KEGG" id="sac:SACOL0545"/>
<dbReference type="HOGENOM" id="CLU_075939_2_1_9"/>
<dbReference type="Proteomes" id="UP000000530">
    <property type="component" value="Chromosome"/>
</dbReference>
<dbReference type="GO" id="GO:0022625">
    <property type="term" value="C:cytosolic large ribosomal subunit"/>
    <property type="evidence" value="ECO:0007669"/>
    <property type="project" value="TreeGrafter"/>
</dbReference>
<dbReference type="GO" id="GO:0008097">
    <property type="term" value="F:5S rRNA binding"/>
    <property type="evidence" value="ECO:0007669"/>
    <property type="project" value="InterPro"/>
</dbReference>
<dbReference type="GO" id="GO:0003735">
    <property type="term" value="F:structural constituent of ribosome"/>
    <property type="evidence" value="ECO:0007669"/>
    <property type="project" value="InterPro"/>
</dbReference>
<dbReference type="GO" id="GO:0006412">
    <property type="term" value="P:translation"/>
    <property type="evidence" value="ECO:0007669"/>
    <property type="project" value="UniProtKB-UniRule"/>
</dbReference>
<dbReference type="CDD" id="cd00495">
    <property type="entry name" value="Ribosomal_L25_TL5_CTC"/>
    <property type="match status" value="1"/>
</dbReference>
<dbReference type="FunFam" id="2.40.240.10:FF:000013">
    <property type="entry name" value="50S ribosomal protein L25"/>
    <property type="match status" value="1"/>
</dbReference>
<dbReference type="Gene3D" id="2.170.120.20">
    <property type="entry name" value="Ribosomal protein L25, beta domain"/>
    <property type="match status" value="1"/>
</dbReference>
<dbReference type="Gene3D" id="2.40.240.10">
    <property type="entry name" value="Ribosomal Protein L25, Chain P"/>
    <property type="match status" value="1"/>
</dbReference>
<dbReference type="HAMAP" id="MF_01334">
    <property type="entry name" value="Ribosomal_bL25_CTC"/>
    <property type="match status" value="1"/>
</dbReference>
<dbReference type="InterPro" id="IPR020056">
    <property type="entry name" value="Rbsml_bL25/Gln-tRNA_synth_N"/>
</dbReference>
<dbReference type="InterPro" id="IPR011035">
    <property type="entry name" value="Ribosomal_bL25/Gln-tRNA_synth"/>
</dbReference>
<dbReference type="InterPro" id="IPR020057">
    <property type="entry name" value="Ribosomal_bL25_b-dom"/>
</dbReference>
<dbReference type="InterPro" id="IPR037121">
    <property type="entry name" value="Ribosomal_bL25_C"/>
</dbReference>
<dbReference type="InterPro" id="IPR001021">
    <property type="entry name" value="Ribosomal_bL25_long"/>
</dbReference>
<dbReference type="InterPro" id="IPR029751">
    <property type="entry name" value="Ribosomal_L25_dom"/>
</dbReference>
<dbReference type="InterPro" id="IPR020930">
    <property type="entry name" value="Ribosomal_uL5_bac-type"/>
</dbReference>
<dbReference type="NCBIfam" id="TIGR00731">
    <property type="entry name" value="bL25_bact_ctc"/>
    <property type="match status" value="1"/>
</dbReference>
<dbReference type="NCBIfam" id="NF004133">
    <property type="entry name" value="PRK05618.2-4"/>
    <property type="match status" value="1"/>
</dbReference>
<dbReference type="NCBIfam" id="NF004134">
    <property type="entry name" value="PRK05618.2-5"/>
    <property type="match status" value="1"/>
</dbReference>
<dbReference type="PANTHER" id="PTHR33284">
    <property type="entry name" value="RIBOSOMAL PROTEIN L25/GLN-TRNA SYNTHETASE, ANTI-CODON-BINDING DOMAIN-CONTAINING PROTEIN"/>
    <property type="match status" value="1"/>
</dbReference>
<dbReference type="PANTHER" id="PTHR33284:SF1">
    <property type="entry name" value="RIBOSOMAL PROTEIN L25_GLN-TRNA SYNTHETASE, ANTI-CODON-BINDING DOMAIN-CONTAINING PROTEIN"/>
    <property type="match status" value="1"/>
</dbReference>
<dbReference type="Pfam" id="PF01386">
    <property type="entry name" value="Ribosomal_L25p"/>
    <property type="match status" value="1"/>
</dbReference>
<dbReference type="Pfam" id="PF14693">
    <property type="entry name" value="Ribosomal_TL5_C"/>
    <property type="match status" value="1"/>
</dbReference>
<dbReference type="SUPFAM" id="SSF50715">
    <property type="entry name" value="Ribosomal protein L25-like"/>
    <property type="match status" value="1"/>
</dbReference>
<reference key="1">
    <citation type="journal article" date="2005" name="J. Bacteriol.">
        <title>Insights on evolution of virulence and resistance from the complete genome analysis of an early methicillin-resistant Staphylococcus aureus strain and a biofilm-producing methicillin-resistant Staphylococcus epidermidis strain.</title>
        <authorList>
            <person name="Gill S.R."/>
            <person name="Fouts D.E."/>
            <person name="Archer G.L."/>
            <person name="Mongodin E.F."/>
            <person name="DeBoy R.T."/>
            <person name="Ravel J."/>
            <person name="Paulsen I.T."/>
            <person name="Kolonay J.F."/>
            <person name="Brinkac L.M."/>
            <person name="Beanan M.J."/>
            <person name="Dodson R.J."/>
            <person name="Daugherty S.C."/>
            <person name="Madupu R."/>
            <person name="Angiuoli S.V."/>
            <person name="Durkin A.S."/>
            <person name="Haft D.H."/>
            <person name="Vamathevan J.J."/>
            <person name="Khouri H."/>
            <person name="Utterback T.R."/>
            <person name="Lee C."/>
            <person name="Dimitrov G."/>
            <person name="Jiang L."/>
            <person name="Qin H."/>
            <person name="Weidman J."/>
            <person name="Tran K."/>
            <person name="Kang K.H."/>
            <person name="Hance I.R."/>
            <person name="Nelson K.E."/>
            <person name="Fraser C.M."/>
        </authorList>
    </citation>
    <scope>NUCLEOTIDE SEQUENCE [LARGE SCALE GENOMIC DNA]</scope>
    <source>
        <strain>COL</strain>
    </source>
</reference>
<feature type="chain" id="PRO_0000181592" description="Large ribosomal subunit protein bL25">
    <location>
        <begin position="1"/>
        <end position="217"/>
    </location>
</feature>
<feature type="region of interest" description="Disordered" evidence="2">
    <location>
        <begin position="178"/>
        <end position="217"/>
    </location>
</feature>
<feature type="compositionally biased region" description="Acidic residues" evidence="2">
    <location>
        <begin position="184"/>
        <end position="205"/>
    </location>
</feature>
<feature type="compositionally biased region" description="Basic and acidic residues" evidence="2">
    <location>
        <begin position="206"/>
        <end position="217"/>
    </location>
</feature>